<sequence length="697" mass="79480">MAITAYDALTERQKAPKVLLINDFAISSSSSSPPFFNLAATFRDNIRSFLREYAEIEDYTIDGATVSTIFLGSQANGVVFPLYIIEQQISDSSPNPLCDFCRCFGWGHHYVTKRKYHMIIPNRDEWNEPLKRESLTLSSHLMHGLIHCNGFGHLLCINTDLDDPNHLSGDQIMDFWDRLCSTLHTRKISLDDTSKKGAMDLRLLHGVAYGRPWFGKWDYMFSHGSFGVKKDLYWRAILTLSSIEVDKILEELSGTSKGRVMKKIIDFYRGSTESPLATLSDLLRFMLGFISKAPIERKTAMALVAMSLDHVSYPTLRADENSEVCTSPDQESDDNGYESGRDTVLDDHNTTTSGIKPPQYYSFDDLSRREHSRWPGRRLNDAAQAVLKVFKERNSTISRQDLREAVRSSIGDTGLIDFLLKHIDKVLIGDQIVQRSTNPKSRMLQFSLRTINSRVQEQKRKKKRKVKPQETSECTSTTPGLSPYDDILYLYQNLLLTYPDSDLYSEASQVILKCKSFVKEWSYQEQNHLTVSCQVLPNHEELLRDFTRLLPPGDLVAVPENATIRELKSAAEKVLRDTYCITETFEVLEIRNRYLEKLDDNVSLKSQGNTEFMVKGFGLDIGTELRYEGGFDDWTVDCKCGARDDDGERMVACDACKVWHHTLCNSIEDDEAVPSVFLCNMCYGDSLRSKKRNLSIR</sequence>
<name>Y2181_ARATH</name>
<proteinExistence type="inferred from homology"/>
<dbReference type="EMBL" id="AC006069">
    <property type="protein sequence ID" value="AAD12714.1"/>
    <property type="molecule type" value="Genomic_DNA"/>
</dbReference>
<dbReference type="EMBL" id="CP002685">
    <property type="protein sequence ID" value="AEC05502.1"/>
    <property type="molecule type" value="Genomic_DNA"/>
</dbReference>
<dbReference type="PIR" id="D84429">
    <property type="entry name" value="D84429"/>
</dbReference>
<dbReference type="RefSeq" id="NP_178290.1">
    <property type="nucleotide sequence ID" value="NM_126242.2"/>
</dbReference>
<dbReference type="SMR" id="Q9ZUA9"/>
<dbReference type="STRING" id="3702.Q9ZUA9"/>
<dbReference type="PaxDb" id="3702-AT2G01810.1"/>
<dbReference type="ProteomicsDB" id="243186"/>
<dbReference type="EnsemblPlants" id="AT2G01810.1">
    <property type="protein sequence ID" value="AT2G01810.1"/>
    <property type="gene ID" value="AT2G01810"/>
</dbReference>
<dbReference type="GeneID" id="814712"/>
<dbReference type="Gramene" id="AT2G01810.1">
    <property type="protein sequence ID" value="AT2G01810.1"/>
    <property type="gene ID" value="AT2G01810"/>
</dbReference>
<dbReference type="KEGG" id="ath:AT2G01810"/>
<dbReference type="Araport" id="AT2G01810"/>
<dbReference type="TAIR" id="AT2G01810"/>
<dbReference type="eggNOG" id="KOG1844">
    <property type="taxonomic scope" value="Eukaryota"/>
</dbReference>
<dbReference type="HOGENOM" id="CLU_012141_0_0_1"/>
<dbReference type="InParanoid" id="Q9ZUA9"/>
<dbReference type="OMA" id="HHYVSKR"/>
<dbReference type="PhylomeDB" id="Q9ZUA9"/>
<dbReference type="PRO" id="PR:Q9ZUA9"/>
<dbReference type="Proteomes" id="UP000006548">
    <property type="component" value="Chromosome 2"/>
</dbReference>
<dbReference type="ExpressionAtlas" id="Q9ZUA9">
    <property type="expression patterns" value="baseline and differential"/>
</dbReference>
<dbReference type="GO" id="GO:0005634">
    <property type="term" value="C:nucleus"/>
    <property type="evidence" value="ECO:0007669"/>
    <property type="project" value="UniProtKB-SubCell"/>
</dbReference>
<dbReference type="GO" id="GO:0008270">
    <property type="term" value="F:zinc ion binding"/>
    <property type="evidence" value="ECO:0007669"/>
    <property type="project" value="UniProtKB-KW"/>
</dbReference>
<dbReference type="CDD" id="cd15556">
    <property type="entry name" value="PHD_MMD1_like"/>
    <property type="match status" value="1"/>
</dbReference>
<dbReference type="Gene3D" id="3.30.40.10">
    <property type="entry name" value="Zinc/RING finger domain, C3HC4 (zinc finger)"/>
    <property type="match status" value="1"/>
</dbReference>
<dbReference type="InterPro" id="IPR019786">
    <property type="entry name" value="Zinc_finger_PHD-type_CS"/>
</dbReference>
<dbReference type="InterPro" id="IPR011011">
    <property type="entry name" value="Znf_FYVE_PHD"/>
</dbReference>
<dbReference type="InterPro" id="IPR001965">
    <property type="entry name" value="Znf_PHD"/>
</dbReference>
<dbReference type="InterPro" id="IPR019787">
    <property type="entry name" value="Znf_PHD-finger"/>
</dbReference>
<dbReference type="InterPro" id="IPR013083">
    <property type="entry name" value="Znf_RING/FYVE/PHD"/>
</dbReference>
<dbReference type="PANTHER" id="PTHR46201:SF7">
    <property type="entry name" value="BINDING PROTEIN, PUTATIVE-RELATED"/>
    <property type="match status" value="1"/>
</dbReference>
<dbReference type="PANTHER" id="PTHR46201">
    <property type="entry name" value="PHD FINGER PROTEIN MALE MEIOCYTE DEATH 1-RELATED"/>
    <property type="match status" value="1"/>
</dbReference>
<dbReference type="Pfam" id="PF00628">
    <property type="entry name" value="PHD"/>
    <property type="match status" value="1"/>
</dbReference>
<dbReference type="SMART" id="SM00249">
    <property type="entry name" value="PHD"/>
    <property type="match status" value="1"/>
</dbReference>
<dbReference type="SUPFAM" id="SSF57903">
    <property type="entry name" value="FYVE/PHD zinc finger"/>
    <property type="match status" value="1"/>
</dbReference>
<dbReference type="PROSITE" id="PS01359">
    <property type="entry name" value="ZF_PHD_1"/>
    <property type="match status" value="1"/>
</dbReference>
<organism>
    <name type="scientific">Arabidopsis thaliana</name>
    <name type="common">Mouse-ear cress</name>
    <dbReference type="NCBI Taxonomy" id="3702"/>
    <lineage>
        <taxon>Eukaryota</taxon>
        <taxon>Viridiplantae</taxon>
        <taxon>Streptophyta</taxon>
        <taxon>Embryophyta</taxon>
        <taxon>Tracheophyta</taxon>
        <taxon>Spermatophyta</taxon>
        <taxon>Magnoliopsida</taxon>
        <taxon>eudicotyledons</taxon>
        <taxon>Gunneridae</taxon>
        <taxon>Pentapetalae</taxon>
        <taxon>rosids</taxon>
        <taxon>malvids</taxon>
        <taxon>Brassicales</taxon>
        <taxon>Brassicaceae</taxon>
        <taxon>Camelineae</taxon>
        <taxon>Arabidopsis</taxon>
    </lineage>
</organism>
<keyword id="KW-0479">Metal-binding</keyword>
<keyword id="KW-0539">Nucleus</keyword>
<keyword id="KW-1185">Reference proteome</keyword>
<keyword id="KW-0804">Transcription</keyword>
<keyword id="KW-0805">Transcription regulation</keyword>
<keyword id="KW-0862">Zinc</keyword>
<keyword id="KW-0863">Zinc-finger</keyword>
<feature type="chain" id="PRO_0000405995" description="PHD finger protein At2g01810">
    <location>
        <begin position="1"/>
        <end position="697"/>
    </location>
</feature>
<feature type="zinc finger region" description="PHD-type">
    <location>
        <begin position="635"/>
        <end position="685"/>
    </location>
</feature>
<feature type="region of interest" description="Disordered" evidence="2">
    <location>
        <begin position="319"/>
        <end position="362"/>
    </location>
</feature>
<feature type="region of interest" description="Disordered" evidence="2">
    <location>
        <begin position="457"/>
        <end position="478"/>
    </location>
</feature>
<feature type="compositionally biased region" description="Basic and acidic residues" evidence="2">
    <location>
        <begin position="339"/>
        <end position="349"/>
    </location>
</feature>
<gene>
    <name type="ordered locus">At2g01810</name>
    <name type="ORF">T8O11.2</name>
</gene>
<reference key="1">
    <citation type="journal article" date="1999" name="Nature">
        <title>Sequence and analysis of chromosome 2 of the plant Arabidopsis thaliana.</title>
        <authorList>
            <person name="Lin X."/>
            <person name="Kaul S."/>
            <person name="Rounsley S.D."/>
            <person name="Shea T.P."/>
            <person name="Benito M.-I."/>
            <person name="Town C.D."/>
            <person name="Fujii C.Y."/>
            <person name="Mason T.M."/>
            <person name="Bowman C.L."/>
            <person name="Barnstead M.E."/>
            <person name="Feldblyum T.V."/>
            <person name="Buell C.R."/>
            <person name="Ketchum K.A."/>
            <person name="Lee J.J."/>
            <person name="Ronning C.M."/>
            <person name="Koo H.L."/>
            <person name="Moffat K.S."/>
            <person name="Cronin L.A."/>
            <person name="Shen M."/>
            <person name="Pai G."/>
            <person name="Van Aken S."/>
            <person name="Umayam L."/>
            <person name="Tallon L.J."/>
            <person name="Gill J.E."/>
            <person name="Adams M.D."/>
            <person name="Carrera A.J."/>
            <person name="Creasy T.H."/>
            <person name="Goodman H.M."/>
            <person name="Somerville C.R."/>
            <person name="Copenhaver G.P."/>
            <person name="Preuss D."/>
            <person name="Nierman W.C."/>
            <person name="White O."/>
            <person name="Eisen J.A."/>
            <person name="Salzberg S.L."/>
            <person name="Fraser C.M."/>
            <person name="Venter J.C."/>
        </authorList>
    </citation>
    <scope>NUCLEOTIDE SEQUENCE [LARGE SCALE GENOMIC DNA]</scope>
    <source>
        <strain>cv. Columbia</strain>
    </source>
</reference>
<reference key="2">
    <citation type="journal article" date="2017" name="Plant J.">
        <title>Araport11: a complete reannotation of the Arabidopsis thaliana reference genome.</title>
        <authorList>
            <person name="Cheng C.Y."/>
            <person name="Krishnakumar V."/>
            <person name="Chan A.P."/>
            <person name="Thibaud-Nissen F."/>
            <person name="Schobel S."/>
            <person name="Town C.D."/>
        </authorList>
    </citation>
    <scope>GENOME REANNOTATION</scope>
    <source>
        <strain>cv. Columbia</strain>
    </source>
</reference>
<accession>Q9ZUA9</accession>
<protein>
    <recommendedName>
        <fullName>PHD finger protein At2g01810</fullName>
    </recommendedName>
</protein>
<evidence type="ECO:0000250" key="1"/>
<evidence type="ECO:0000256" key="2">
    <source>
        <dbReference type="SAM" id="MobiDB-lite"/>
    </source>
</evidence>
<comment type="subcellular location">
    <subcellularLocation>
        <location evidence="1">Nucleus</location>
    </subcellularLocation>
</comment>